<dbReference type="EC" id="1.14.12.3"/>
<dbReference type="EC" id="1.14.12.11"/>
<dbReference type="EMBL" id="J04996">
    <property type="protein sequence ID" value="AAA26005.1"/>
    <property type="molecule type" value="Genomic_DNA"/>
</dbReference>
<dbReference type="EMBL" id="CP000712">
    <property type="protein sequence ID" value="ABQ79012.1"/>
    <property type="molecule type" value="Genomic_DNA"/>
</dbReference>
<dbReference type="PIR" id="A36516">
    <property type="entry name" value="A36516"/>
</dbReference>
<dbReference type="PDB" id="3EN1">
    <property type="method" value="X-ray"/>
    <property type="resolution" value="3.20 A"/>
    <property type="chains" value="A=1-450"/>
</dbReference>
<dbReference type="PDB" id="3EQQ">
    <property type="method" value="X-ray"/>
    <property type="resolution" value="3.20 A"/>
    <property type="chains" value="A=1-450"/>
</dbReference>
<dbReference type="PDBsum" id="3EN1"/>
<dbReference type="PDBsum" id="3EQQ"/>
<dbReference type="SMR" id="A5W4F2"/>
<dbReference type="KEGG" id="ppf:Pput_2881"/>
<dbReference type="eggNOG" id="COG4638">
    <property type="taxonomic scope" value="Bacteria"/>
</dbReference>
<dbReference type="HOGENOM" id="CLU_026244_4_0_6"/>
<dbReference type="BRENDA" id="1.14.12.11">
    <property type="organism ID" value="5092"/>
</dbReference>
<dbReference type="UniPathway" id="UPA00228"/>
<dbReference type="UniPathway" id="UPA00272">
    <property type="reaction ID" value="UER00391"/>
</dbReference>
<dbReference type="UniPathway" id="UPA00273"/>
<dbReference type="EvolutionaryTrace" id="A5W4F2"/>
<dbReference type="GO" id="GO:0051537">
    <property type="term" value="F:2 iron, 2 sulfur cluster binding"/>
    <property type="evidence" value="ECO:0007669"/>
    <property type="project" value="UniProtKB-KW"/>
</dbReference>
<dbReference type="GO" id="GO:0018619">
    <property type="term" value="F:benzene 1,2-dioxygenase activity"/>
    <property type="evidence" value="ECO:0007669"/>
    <property type="project" value="UniProtKB-EC"/>
</dbReference>
<dbReference type="GO" id="GO:0005506">
    <property type="term" value="F:iron ion binding"/>
    <property type="evidence" value="ECO:0007669"/>
    <property type="project" value="InterPro"/>
</dbReference>
<dbReference type="GO" id="GO:0018624">
    <property type="term" value="F:toluene dioxygenase activity"/>
    <property type="evidence" value="ECO:0007669"/>
    <property type="project" value="UniProtKB-EC"/>
</dbReference>
<dbReference type="GO" id="GO:0042203">
    <property type="term" value="P:toluene catabolic process"/>
    <property type="evidence" value="ECO:0007669"/>
    <property type="project" value="UniProtKB-UniPathway"/>
</dbReference>
<dbReference type="GO" id="GO:0042184">
    <property type="term" value="P:xylene catabolic process"/>
    <property type="evidence" value="ECO:0007669"/>
    <property type="project" value="UniProtKB-UniPathway"/>
</dbReference>
<dbReference type="CDD" id="cd08881">
    <property type="entry name" value="RHO_alpha_C_NDO-like"/>
    <property type="match status" value="1"/>
</dbReference>
<dbReference type="Gene3D" id="3.90.380.10">
    <property type="entry name" value="Naphthalene 1,2-dioxygenase Alpha Subunit, Chain A, domain 1"/>
    <property type="match status" value="1"/>
</dbReference>
<dbReference type="Gene3D" id="2.102.10.10">
    <property type="entry name" value="Rieske [2Fe-2S] iron-sulphur domain"/>
    <property type="match status" value="1"/>
</dbReference>
<dbReference type="InterPro" id="IPR043266">
    <property type="entry name" value="RHO_NdoB-like_C"/>
</dbReference>
<dbReference type="InterPro" id="IPR017941">
    <property type="entry name" value="Rieske_2Fe-2S"/>
</dbReference>
<dbReference type="InterPro" id="IPR036922">
    <property type="entry name" value="Rieske_2Fe-2S_sf"/>
</dbReference>
<dbReference type="InterPro" id="IPR015881">
    <property type="entry name" value="Ring-hydroxy_dOase_2Fe2S_BS"/>
</dbReference>
<dbReference type="InterPro" id="IPR015879">
    <property type="entry name" value="Ring_hydroxy_dOase_asu_C_dom"/>
</dbReference>
<dbReference type="InterPro" id="IPR001663">
    <property type="entry name" value="Rng_hydr_dOase-A"/>
</dbReference>
<dbReference type="PANTHER" id="PTHR43756:SF1">
    <property type="entry name" value="3-PHENYLPROPIONATE_CINNAMIC ACID DIOXYGENASE SUBUNIT ALPHA"/>
    <property type="match status" value="1"/>
</dbReference>
<dbReference type="PANTHER" id="PTHR43756">
    <property type="entry name" value="CHOLINE MONOOXYGENASE, CHLOROPLASTIC"/>
    <property type="match status" value="1"/>
</dbReference>
<dbReference type="Pfam" id="PF00355">
    <property type="entry name" value="Rieske"/>
    <property type="match status" value="1"/>
</dbReference>
<dbReference type="Pfam" id="PF00848">
    <property type="entry name" value="Ring_hydroxyl_A"/>
    <property type="match status" value="1"/>
</dbReference>
<dbReference type="PRINTS" id="PR00090">
    <property type="entry name" value="RNGDIOXGNASE"/>
</dbReference>
<dbReference type="SUPFAM" id="SSF55961">
    <property type="entry name" value="Bet v1-like"/>
    <property type="match status" value="1"/>
</dbReference>
<dbReference type="SUPFAM" id="SSF50022">
    <property type="entry name" value="ISP domain"/>
    <property type="match status" value="1"/>
</dbReference>
<dbReference type="PROSITE" id="PS51296">
    <property type="entry name" value="RIESKE"/>
    <property type="match status" value="1"/>
</dbReference>
<dbReference type="PROSITE" id="PS00570">
    <property type="entry name" value="RING_HYDROXYL_ALPHA"/>
    <property type="match status" value="1"/>
</dbReference>
<evidence type="ECO:0000250" key="1"/>
<evidence type="ECO:0000255" key="2">
    <source>
        <dbReference type="PROSITE-ProRule" id="PRU00628"/>
    </source>
</evidence>
<evidence type="ECO:0000305" key="3"/>
<evidence type="ECO:0007829" key="4">
    <source>
        <dbReference type="PDB" id="3EN1"/>
    </source>
</evidence>
<evidence type="ECO:0007829" key="5">
    <source>
        <dbReference type="PDB" id="3EQQ"/>
    </source>
</evidence>
<organism>
    <name type="scientific">Pseudomonas putida (strain ATCC 700007 / DSM 6899 / JCM 31910 / BCRC 17059 / LMG 24140 / F1)</name>
    <dbReference type="NCBI Taxonomy" id="351746"/>
    <lineage>
        <taxon>Bacteria</taxon>
        <taxon>Pseudomonadati</taxon>
        <taxon>Pseudomonadota</taxon>
        <taxon>Gammaproteobacteria</taxon>
        <taxon>Pseudomonadales</taxon>
        <taxon>Pseudomonadaceae</taxon>
        <taxon>Pseudomonas</taxon>
    </lineage>
</organism>
<keyword id="KW-0001">2Fe-2S</keyword>
<keyword id="KW-0002">3D-structure</keyword>
<keyword id="KW-0058">Aromatic hydrocarbons catabolism</keyword>
<keyword id="KW-0223">Dioxygenase</keyword>
<keyword id="KW-0903">Direct protein sequencing</keyword>
<keyword id="KW-0408">Iron</keyword>
<keyword id="KW-0411">Iron-sulfur</keyword>
<keyword id="KW-0479">Metal-binding</keyword>
<keyword id="KW-0520">NAD</keyword>
<keyword id="KW-0560">Oxidoreductase</keyword>
<reference key="1">
    <citation type="journal article" date="1989" name="J. Biol. Chem.">
        <title>Toluene degradation by Pseudomonas putida F1. Nucleotide sequence of the todC1C2BADE genes and their expression in Escherichia coli.</title>
        <authorList>
            <person name="Zylstra G.J."/>
            <person name="Gibson D.T."/>
        </authorList>
    </citation>
    <scope>NUCLEOTIDE SEQUENCE [GENOMIC DNA]</scope>
    <scope>PROTEIN SEQUENCE OF 1-12</scope>
</reference>
<reference key="2">
    <citation type="submission" date="2007-05" db="EMBL/GenBank/DDBJ databases">
        <title>Complete sequence of Pseudomonas putida F1.</title>
        <authorList>
            <consortium name="US DOE Joint Genome Institute"/>
            <person name="Copeland A."/>
            <person name="Lucas S."/>
            <person name="Lapidus A."/>
            <person name="Barry K."/>
            <person name="Detter J.C."/>
            <person name="Glavina del Rio T."/>
            <person name="Hammon N."/>
            <person name="Israni S."/>
            <person name="Dalin E."/>
            <person name="Tice H."/>
            <person name="Pitluck S."/>
            <person name="Chain P."/>
            <person name="Malfatti S."/>
            <person name="Shin M."/>
            <person name="Vergez L."/>
            <person name="Schmutz J."/>
            <person name="Larimer F."/>
            <person name="Land M."/>
            <person name="Hauser L."/>
            <person name="Kyrpides N."/>
            <person name="Lykidis A."/>
            <person name="Parales R."/>
            <person name="Richardson P."/>
        </authorList>
    </citation>
    <scope>NUCLEOTIDE SEQUENCE [LARGE SCALE GENOMIC DNA]</scope>
    <source>
        <strain>ATCC 700007 / DSM 6899 / JCM 31910 / BCRC 17059 / LMG 24140 / F1</strain>
    </source>
</reference>
<name>BNZA_PSEP1</name>
<proteinExistence type="evidence at protein level"/>
<feature type="chain" id="PRO_0000314465" description="Benzene 1,2-dioxygenase subunit alpha">
    <location>
        <begin position="1"/>
        <end position="450"/>
    </location>
</feature>
<feature type="domain" description="Rieske" evidence="2">
    <location>
        <begin position="54"/>
        <end position="163"/>
    </location>
</feature>
<feature type="binding site" evidence="2">
    <location>
        <position position="96"/>
    </location>
    <ligand>
        <name>[2Fe-2S] cluster</name>
        <dbReference type="ChEBI" id="CHEBI:190135"/>
    </ligand>
</feature>
<feature type="binding site" evidence="2">
    <location>
        <position position="98"/>
    </location>
    <ligand>
        <name>[2Fe-2S] cluster</name>
        <dbReference type="ChEBI" id="CHEBI:190135"/>
    </ligand>
</feature>
<feature type="binding site" evidence="2">
    <location>
        <position position="116"/>
    </location>
    <ligand>
        <name>[2Fe-2S] cluster</name>
        <dbReference type="ChEBI" id="CHEBI:190135"/>
    </ligand>
</feature>
<feature type="binding site" evidence="2">
    <location>
        <position position="119"/>
    </location>
    <ligand>
        <name>[2Fe-2S] cluster</name>
        <dbReference type="ChEBI" id="CHEBI:190135"/>
    </ligand>
</feature>
<feature type="binding site" evidence="1">
    <location>
        <position position="222"/>
    </location>
    <ligand>
        <name>Fe cation</name>
        <dbReference type="ChEBI" id="CHEBI:24875"/>
    </ligand>
</feature>
<feature type="binding site" evidence="1">
    <location>
        <position position="228"/>
    </location>
    <ligand>
        <name>Fe cation</name>
        <dbReference type="ChEBI" id="CHEBI:24875"/>
    </ligand>
</feature>
<feature type="helix" evidence="4">
    <location>
        <begin position="17"/>
        <end position="22"/>
    </location>
</feature>
<feature type="turn" evidence="4">
    <location>
        <begin position="26"/>
        <end position="29"/>
    </location>
</feature>
<feature type="helix" evidence="4">
    <location>
        <begin position="33"/>
        <end position="36"/>
    </location>
</feature>
<feature type="helix" evidence="4">
    <location>
        <begin position="39"/>
        <end position="48"/>
    </location>
</feature>
<feature type="helix" evidence="4">
    <location>
        <begin position="50"/>
        <end position="52"/>
    </location>
</feature>
<feature type="strand" evidence="4">
    <location>
        <begin position="55"/>
        <end position="59"/>
    </location>
</feature>
<feature type="helix" evidence="4">
    <location>
        <begin position="60"/>
        <end position="62"/>
    </location>
</feature>
<feature type="strand" evidence="4">
    <location>
        <begin position="68"/>
        <end position="74"/>
    </location>
</feature>
<feature type="strand" evidence="4">
    <location>
        <begin position="77"/>
        <end position="83"/>
    </location>
</feature>
<feature type="strand" evidence="4">
    <location>
        <begin position="89"/>
        <end position="95"/>
    </location>
</feature>
<feature type="turn" evidence="4">
    <location>
        <begin position="97"/>
        <end position="99"/>
    </location>
</feature>
<feature type="strand" evidence="4">
    <location>
        <begin position="106"/>
        <end position="110"/>
    </location>
</feature>
<feature type="strand" evidence="4">
    <location>
        <begin position="112"/>
        <end position="115"/>
    </location>
</feature>
<feature type="turn" evidence="4">
    <location>
        <begin position="117"/>
        <end position="119"/>
    </location>
</feature>
<feature type="strand" evidence="4">
    <location>
        <begin position="122"/>
        <end position="124"/>
    </location>
</feature>
<feature type="strand" evidence="4">
    <location>
        <begin position="129"/>
        <end position="131"/>
    </location>
</feature>
<feature type="helix" evidence="4">
    <location>
        <begin position="135"/>
        <end position="138"/>
    </location>
</feature>
<feature type="turn" evidence="4">
    <location>
        <begin position="144"/>
        <end position="147"/>
    </location>
</feature>
<feature type="strand" evidence="4">
    <location>
        <begin position="153"/>
        <end position="157"/>
    </location>
</feature>
<feature type="strand" evidence="4">
    <location>
        <begin position="160"/>
        <end position="164"/>
    </location>
</feature>
<feature type="helix" evidence="4">
    <location>
        <begin position="172"/>
        <end position="176"/>
    </location>
</feature>
<feature type="helix" evidence="4">
    <location>
        <begin position="177"/>
        <end position="179"/>
    </location>
</feature>
<feature type="helix" evidence="4">
    <location>
        <begin position="180"/>
        <end position="187"/>
    </location>
</feature>
<feature type="strand" evidence="5">
    <location>
        <begin position="188"/>
        <end position="190"/>
    </location>
</feature>
<feature type="strand" evidence="4">
    <location>
        <begin position="194"/>
        <end position="205"/>
    </location>
</feature>
<feature type="helix" evidence="4">
    <location>
        <begin position="209"/>
        <end position="218"/>
    </location>
</feature>
<feature type="helix" evidence="4">
    <location>
        <begin position="220"/>
        <end position="223"/>
    </location>
</feature>
<feature type="turn" evidence="4">
    <location>
        <begin position="224"/>
        <end position="228"/>
    </location>
</feature>
<feature type="helix" evidence="4">
    <location>
        <begin position="229"/>
        <end position="234"/>
    </location>
</feature>
<feature type="strand" evidence="4">
    <location>
        <begin position="251"/>
        <end position="255"/>
    </location>
</feature>
<feature type="strand" evidence="4">
    <location>
        <begin position="257"/>
        <end position="260"/>
    </location>
</feature>
<feature type="strand" evidence="4">
    <location>
        <begin position="262"/>
        <end position="268"/>
    </location>
</feature>
<feature type="helix" evidence="4">
    <location>
        <begin position="271"/>
        <end position="286"/>
    </location>
</feature>
<feature type="helix" evidence="4">
    <location>
        <begin position="289"/>
        <end position="298"/>
    </location>
</feature>
<feature type="helix" evidence="4">
    <location>
        <begin position="301"/>
        <end position="305"/>
    </location>
</feature>
<feature type="strand" evidence="4">
    <location>
        <begin position="311"/>
        <end position="314"/>
    </location>
</feature>
<feature type="turn" evidence="4">
    <location>
        <begin position="315"/>
        <end position="317"/>
    </location>
</feature>
<feature type="strand" evidence="4">
    <location>
        <begin position="318"/>
        <end position="320"/>
    </location>
</feature>
<feature type="turn" evidence="4">
    <location>
        <begin position="322"/>
        <end position="324"/>
    </location>
</feature>
<feature type="strand" evidence="4">
    <location>
        <begin position="326"/>
        <end position="332"/>
    </location>
</feature>
<feature type="strand" evidence="5">
    <location>
        <begin position="334"/>
        <end position="336"/>
    </location>
</feature>
<feature type="strand" evidence="4">
    <location>
        <begin position="338"/>
        <end position="347"/>
    </location>
</feature>
<feature type="helix" evidence="4">
    <location>
        <begin position="352"/>
        <end position="365"/>
    </location>
</feature>
<feature type="strand" evidence="5">
    <location>
        <begin position="366"/>
        <end position="369"/>
    </location>
</feature>
<feature type="helix" evidence="4">
    <location>
        <begin position="373"/>
        <end position="386"/>
    </location>
</feature>
<feature type="helix" evidence="4">
    <location>
        <begin position="391"/>
        <end position="393"/>
    </location>
</feature>
<feature type="turn" evidence="4">
    <location>
        <begin position="401"/>
        <end position="404"/>
    </location>
</feature>
<feature type="strand" evidence="4">
    <location>
        <begin position="406"/>
        <end position="408"/>
    </location>
</feature>
<feature type="strand" evidence="4">
    <location>
        <begin position="411"/>
        <end position="413"/>
    </location>
</feature>
<feature type="strand" evidence="4">
    <location>
        <begin position="415"/>
        <end position="419"/>
    </location>
</feature>
<feature type="helix" evidence="4">
    <location>
        <begin position="425"/>
        <end position="438"/>
    </location>
</feature>
<sequence length="450" mass="50944">MNQTDTSPIRLRRSWNTSEIEALFDEHAGRIDPRIYTDEDLYQLELERVFARSWLLLGHETQIRKPGDYITTYMGEDPVVVVRQKDASIAVFLNQCRHRGMRICRADAGNAKAFTCSYHGWAYDTAGNLVNVPYEAESFACLNKKEWSPLKARVETYKGLIFANWDENAVDLDTYLGEAKFYMDHMLDRTEAGTEAIPGVQKWVIPCNWKFAAEQFCSDMYHAGTTSHLSGILAGLPEDLEMADLAPPTVGKQYRASWGGHGSGFYVGDPNLMLAIMGPKVTSYWTEGPASEKAAERLGSVERGSKLMVEHMTVFPTCSFLPGINTVRTWHPRGPNEVEVWAFTVVDADAPDDIKEEFRRQTLRTFSAGGVFEQDDGENWVEIQHILRGHKARSRPFNAEMSMDQTVDNDPVYPGRISNNVYSEEAARGLYAHWLRMMTSPDWDALKATR</sequence>
<comment type="function">
    <text>Catalyzes both the oxidation of benzene and toluene.</text>
</comment>
<comment type="catalytic activity">
    <reaction>
        <text>benzene + NADH + O2 + H(+) = cis-1,2-dihydrobenzene-1,2-diol + NAD(+)</text>
        <dbReference type="Rhea" id="RHEA:13813"/>
        <dbReference type="ChEBI" id="CHEBI:15378"/>
        <dbReference type="ChEBI" id="CHEBI:15379"/>
        <dbReference type="ChEBI" id="CHEBI:16190"/>
        <dbReference type="ChEBI" id="CHEBI:16716"/>
        <dbReference type="ChEBI" id="CHEBI:57540"/>
        <dbReference type="ChEBI" id="CHEBI:57945"/>
        <dbReference type="EC" id="1.14.12.3"/>
    </reaction>
</comment>
<comment type="catalytic activity">
    <reaction>
        <text>toluene + NADH + O2 + H(+) = (1S,2R)-3-methylcyclohexa-3,5-diene-1,2-diol + NAD(+)</text>
        <dbReference type="Rhea" id="RHEA:16737"/>
        <dbReference type="ChEBI" id="CHEBI:15378"/>
        <dbReference type="ChEBI" id="CHEBI:15379"/>
        <dbReference type="ChEBI" id="CHEBI:15565"/>
        <dbReference type="ChEBI" id="CHEBI:17578"/>
        <dbReference type="ChEBI" id="CHEBI:57540"/>
        <dbReference type="ChEBI" id="CHEBI:57945"/>
        <dbReference type="EC" id="1.14.12.11"/>
    </reaction>
</comment>
<comment type="cofactor">
    <cofactor evidence="2">
        <name>[2Fe-2S] cluster</name>
        <dbReference type="ChEBI" id="CHEBI:190135"/>
    </cofactor>
    <text evidence="2">Binds 1 [2Fe-2S] cluster per subunit.</text>
</comment>
<comment type="cofactor">
    <cofactor evidence="1">
        <name>Fe cation</name>
        <dbReference type="ChEBI" id="CHEBI:24875"/>
    </cofactor>
    <text evidence="1">Binds 1 Fe cation per subunit.</text>
</comment>
<comment type="pathway">
    <text>Aromatic compound metabolism; benzene degradation; catechol from benzene: step 1/2.</text>
</comment>
<comment type="pathway">
    <text>Xenobiotic degradation; toluene degradation.</text>
</comment>
<comment type="pathway">
    <text>Xenobiotic degradation; xylene degradation.</text>
</comment>
<comment type="subunit">
    <text>This dioxygenase system consists of four proteins: the two subunits of the hydroxylase component (BnzA and BnzB), a ferredoxin (BnzC) and a ferredoxin reductase (BnzD).</text>
</comment>
<comment type="similarity">
    <text evidence="3">Belongs to the bacterial ring-hydroxylating dioxygenase alpha subunit family.</text>
</comment>
<gene>
    <name type="primary">bnzA</name>
    <name type="synonym">todC1</name>
    <name type="ordered locus">Pput_2881</name>
</gene>
<protein>
    <recommendedName>
        <fullName>Benzene 1,2-dioxygenase subunit alpha</fullName>
        <ecNumber>1.14.12.3</ecNumber>
    </recommendedName>
    <alternativeName>
        <fullName>Benzene 1,2-dioxygenase P1 subunit</fullName>
    </alternativeName>
    <alternativeName>
        <fullName>Toluene 2,3-dioxygenase subunit alpha</fullName>
        <ecNumber>1.14.12.11</ecNumber>
    </alternativeName>
</protein>
<accession>A5W4F2</accession>
<accession>P08084</accession>
<accession>P13450</accession>